<comment type="function">
    <text evidence="1">Catalyzes the acyloin condensation reaction between C atoms 2 and 3 of pyruvate and glyceraldehyde 3-phosphate to yield 1-deoxy-D-xylulose-5-phosphate (DXP).</text>
</comment>
<comment type="catalytic activity">
    <reaction evidence="1">
        <text>D-glyceraldehyde 3-phosphate + pyruvate + H(+) = 1-deoxy-D-xylulose 5-phosphate + CO2</text>
        <dbReference type="Rhea" id="RHEA:12605"/>
        <dbReference type="ChEBI" id="CHEBI:15361"/>
        <dbReference type="ChEBI" id="CHEBI:15378"/>
        <dbReference type="ChEBI" id="CHEBI:16526"/>
        <dbReference type="ChEBI" id="CHEBI:57792"/>
        <dbReference type="ChEBI" id="CHEBI:59776"/>
        <dbReference type="EC" id="2.2.1.7"/>
    </reaction>
</comment>
<comment type="cofactor">
    <cofactor evidence="1">
        <name>Mg(2+)</name>
        <dbReference type="ChEBI" id="CHEBI:18420"/>
    </cofactor>
    <text evidence="1">Binds 1 Mg(2+) ion per subunit.</text>
</comment>
<comment type="cofactor">
    <cofactor evidence="1">
        <name>thiamine diphosphate</name>
        <dbReference type="ChEBI" id="CHEBI:58937"/>
    </cofactor>
    <text evidence="1">Binds 1 thiamine pyrophosphate per subunit.</text>
</comment>
<comment type="pathway">
    <text evidence="1">Metabolic intermediate biosynthesis; 1-deoxy-D-xylulose 5-phosphate biosynthesis; 1-deoxy-D-xylulose 5-phosphate from D-glyceraldehyde 3-phosphate and pyruvate: step 1/1.</text>
</comment>
<comment type="subunit">
    <text evidence="1">Homodimer.</text>
</comment>
<comment type="similarity">
    <text evidence="1">Belongs to the transketolase family. DXPS subfamily.</text>
</comment>
<accession>Q62DU1</accession>
<organism>
    <name type="scientific">Burkholderia mallei (strain ATCC 23344)</name>
    <dbReference type="NCBI Taxonomy" id="243160"/>
    <lineage>
        <taxon>Bacteria</taxon>
        <taxon>Pseudomonadati</taxon>
        <taxon>Pseudomonadota</taxon>
        <taxon>Betaproteobacteria</taxon>
        <taxon>Burkholderiales</taxon>
        <taxon>Burkholderiaceae</taxon>
        <taxon>Burkholderia</taxon>
        <taxon>pseudomallei group</taxon>
    </lineage>
</organism>
<dbReference type="EC" id="2.2.1.7" evidence="1"/>
<dbReference type="EMBL" id="CP000011">
    <property type="protein sequence ID" value="AAU45983.1"/>
    <property type="molecule type" value="Genomic_DNA"/>
</dbReference>
<dbReference type="RefSeq" id="WP_004266656.1">
    <property type="nucleotide sequence ID" value="NC_006349.2"/>
</dbReference>
<dbReference type="RefSeq" id="YP_105137.1">
    <property type="nucleotide sequence ID" value="NC_006349.2"/>
</dbReference>
<dbReference type="SMR" id="Q62DU1"/>
<dbReference type="GeneID" id="93063969"/>
<dbReference type="KEGG" id="bma:BMAA0330"/>
<dbReference type="PATRIC" id="fig|243160.12.peg.3825"/>
<dbReference type="eggNOG" id="COG1154">
    <property type="taxonomic scope" value="Bacteria"/>
</dbReference>
<dbReference type="HOGENOM" id="CLU_009227_1_4_4"/>
<dbReference type="UniPathway" id="UPA00064">
    <property type="reaction ID" value="UER00091"/>
</dbReference>
<dbReference type="Proteomes" id="UP000006693">
    <property type="component" value="Chromosome 2"/>
</dbReference>
<dbReference type="GO" id="GO:0005829">
    <property type="term" value="C:cytosol"/>
    <property type="evidence" value="ECO:0007669"/>
    <property type="project" value="TreeGrafter"/>
</dbReference>
<dbReference type="GO" id="GO:0008661">
    <property type="term" value="F:1-deoxy-D-xylulose-5-phosphate synthase activity"/>
    <property type="evidence" value="ECO:0007669"/>
    <property type="project" value="UniProtKB-UniRule"/>
</dbReference>
<dbReference type="GO" id="GO:0000287">
    <property type="term" value="F:magnesium ion binding"/>
    <property type="evidence" value="ECO:0007669"/>
    <property type="project" value="UniProtKB-UniRule"/>
</dbReference>
<dbReference type="GO" id="GO:0030976">
    <property type="term" value="F:thiamine pyrophosphate binding"/>
    <property type="evidence" value="ECO:0007669"/>
    <property type="project" value="UniProtKB-UniRule"/>
</dbReference>
<dbReference type="GO" id="GO:0052865">
    <property type="term" value="P:1-deoxy-D-xylulose 5-phosphate biosynthetic process"/>
    <property type="evidence" value="ECO:0007669"/>
    <property type="project" value="UniProtKB-UniPathway"/>
</dbReference>
<dbReference type="GO" id="GO:0019288">
    <property type="term" value="P:isopentenyl diphosphate biosynthetic process, methylerythritol 4-phosphate pathway"/>
    <property type="evidence" value="ECO:0007669"/>
    <property type="project" value="TreeGrafter"/>
</dbReference>
<dbReference type="GO" id="GO:0016114">
    <property type="term" value="P:terpenoid biosynthetic process"/>
    <property type="evidence" value="ECO:0007669"/>
    <property type="project" value="UniProtKB-UniRule"/>
</dbReference>
<dbReference type="GO" id="GO:0009228">
    <property type="term" value="P:thiamine biosynthetic process"/>
    <property type="evidence" value="ECO:0007669"/>
    <property type="project" value="UniProtKB-UniRule"/>
</dbReference>
<dbReference type="CDD" id="cd02007">
    <property type="entry name" value="TPP_DXS"/>
    <property type="match status" value="1"/>
</dbReference>
<dbReference type="CDD" id="cd07033">
    <property type="entry name" value="TPP_PYR_DXS_TK_like"/>
    <property type="match status" value="1"/>
</dbReference>
<dbReference type="FunFam" id="3.40.50.920:FF:000002">
    <property type="entry name" value="1-deoxy-D-xylulose-5-phosphate synthase"/>
    <property type="match status" value="1"/>
</dbReference>
<dbReference type="FunFam" id="3.40.50.970:FF:000005">
    <property type="entry name" value="1-deoxy-D-xylulose-5-phosphate synthase"/>
    <property type="match status" value="1"/>
</dbReference>
<dbReference type="Gene3D" id="3.40.50.920">
    <property type="match status" value="1"/>
</dbReference>
<dbReference type="Gene3D" id="3.40.50.970">
    <property type="match status" value="2"/>
</dbReference>
<dbReference type="HAMAP" id="MF_00315">
    <property type="entry name" value="DXP_synth"/>
    <property type="match status" value="1"/>
</dbReference>
<dbReference type="InterPro" id="IPR005477">
    <property type="entry name" value="Dxylulose-5-P_synthase"/>
</dbReference>
<dbReference type="InterPro" id="IPR029061">
    <property type="entry name" value="THDP-binding"/>
</dbReference>
<dbReference type="InterPro" id="IPR009014">
    <property type="entry name" value="Transketo_C/PFOR_II"/>
</dbReference>
<dbReference type="InterPro" id="IPR005475">
    <property type="entry name" value="Transketolase-like_Pyr-bd"/>
</dbReference>
<dbReference type="InterPro" id="IPR020826">
    <property type="entry name" value="Transketolase_BS"/>
</dbReference>
<dbReference type="InterPro" id="IPR033248">
    <property type="entry name" value="Transketolase_C"/>
</dbReference>
<dbReference type="InterPro" id="IPR049557">
    <property type="entry name" value="Transketolase_CS"/>
</dbReference>
<dbReference type="NCBIfam" id="TIGR00204">
    <property type="entry name" value="dxs"/>
    <property type="match status" value="1"/>
</dbReference>
<dbReference type="NCBIfam" id="NF003933">
    <property type="entry name" value="PRK05444.2-2"/>
    <property type="match status" value="1"/>
</dbReference>
<dbReference type="PANTHER" id="PTHR43322">
    <property type="entry name" value="1-D-DEOXYXYLULOSE 5-PHOSPHATE SYNTHASE-RELATED"/>
    <property type="match status" value="1"/>
</dbReference>
<dbReference type="PANTHER" id="PTHR43322:SF5">
    <property type="entry name" value="1-DEOXY-D-XYLULOSE-5-PHOSPHATE SYNTHASE, CHLOROPLASTIC"/>
    <property type="match status" value="1"/>
</dbReference>
<dbReference type="Pfam" id="PF13292">
    <property type="entry name" value="DXP_synthase_N"/>
    <property type="match status" value="1"/>
</dbReference>
<dbReference type="Pfam" id="PF02779">
    <property type="entry name" value="Transket_pyr"/>
    <property type="match status" value="1"/>
</dbReference>
<dbReference type="Pfam" id="PF02780">
    <property type="entry name" value="Transketolase_C"/>
    <property type="match status" value="1"/>
</dbReference>
<dbReference type="SMART" id="SM00861">
    <property type="entry name" value="Transket_pyr"/>
    <property type="match status" value="1"/>
</dbReference>
<dbReference type="SUPFAM" id="SSF52518">
    <property type="entry name" value="Thiamin diphosphate-binding fold (THDP-binding)"/>
    <property type="match status" value="2"/>
</dbReference>
<dbReference type="SUPFAM" id="SSF52922">
    <property type="entry name" value="TK C-terminal domain-like"/>
    <property type="match status" value="1"/>
</dbReference>
<dbReference type="PROSITE" id="PS00801">
    <property type="entry name" value="TRANSKETOLASE_1"/>
    <property type="match status" value="1"/>
</dbReference>
<dbReference type="PROSITE" id="PS00802">
    <property type="entry name" value="TRANSKETOLASE_2"/>
    <property type="match status" value="1"/>
</dbReference>
<feature type="chain" id="PRO_0000256388" description="1-deoxy-D-xylulose-5-phosphate synthase">
    <location>
        <begin position="1"/>
        <end position="634"/>
    </location>
</feature>
<feature type="binding site" evidence="1">
    <location>
        <position position="74"/>
    </location>
    <ligand>
        <name>thiamine diphosphate</name>
        <dbReference type="ChEBI" id="CHEBI:58937"/>
    </ligand>
</feature>
<feature type="binding site" evidence="1">
    <location>
        <begin position="115"/>
        <end position="117"/>
    </location>
    <ligand>
        <name>thiamine diphosphate</name>
        <dbReference type="ChEBI" id="CHEBI:58937"/>
    </ligand>
</feature>
<feature type="binding site" evidence="1">
    <location>
        <position position="146"/>
    </location>
    <ligand>
        <name>Mg(2+)</name>
        <dbReference type="ChEBI" id="CHEBI:18420"/>
    </ligand>
</feature>
<feature type="binding site" evidence="1">
    <location>
        <begin position="147"/>
        <end position="148"/>
    </location>
    <ligand>
        <name>thiamine diphosphate</name>
        <dbReference type="ChEBI" id="CHEBI:58937"/>
    </ligand>
</feature>
<feature type="binding site" evidence="1">
    <location>
        <position position="176"/>
    </location>
    <ligand>
        <name>Mg(2+)</name>
        <dbReference type="ChEBI" id="CHEBI:18420"/>
    </ligand>
</feature>
<feature type="binding site" evidence="1">
    <location>
        <position position="176"/>
    </location>
    <ligand>
        <name>thiamine diphosphate</name>
        <dbReference type="ChEBI" id="CHEBI:58937"/>
    </ligand>
</feature>
<feature type="binding site" evidence="1">
    <location>
        <position position="283"/>
    </location>
    <ligand>
        <name>thiamine diphosphate</name>
        <dbReference type="ChEBI" id="CHEBI:58937"/>
    </ligand>
</feature>
<feature type="binding site" evidence="1">
    <location>
        <position position="365"/>
    </location>
    <ligand>
        <name>thiamine diphosphate</name>
        <dbReference type="ChEBI" id="CHEBI:58937"/>
    </ligand>
</feature>
<sequence length="634" mass="68281">MYDLLKTIDDPADLRRLDRRQLQPLADELRAFVLDSVSKTGGHLSSNLGTVELTIALHYVFNTPDDRIVWDVGHQTYPHKILTGRRDGMKTLRQFDGISGFPRRSESEYDTFGTAHSSTSISAALGMAIGSKLNGDDRFSIAVIGDGAMTAGMAFEAMNNAGVSEDAKLLVILNDNDMSISPPVGALNRHLARLMSGRFYAAARAGVERVLSVAPPVLELARKLEEHAKGMVVPATLFEEFGFNYIGPIDGHDLDSLIPTLQNIKELRGPQFLHVVTKKGQGYKLAEADPVLYHGPGKFNPAEGIKPSTTPAKKTYTQVFGEWLCDAAELDARVVGITPAMREGSGMVEFEKRFPERYYDVGIAEQHAVTFAGGLATEGLKPVVAIYSTFLQRAYDQLIHDVALQNLPVVFAIDRAGLVGADGATHAGAYDLAFLRCIPNMTVMAASDENECRQMLHTALQQPNPTAVRYPRGAGTGVATVKAFTEIPLGKGEVRRRTSQPDGKRIAILAFGTMVAPSLAAADALDATVANMRFVKPIDAELVQALARTHDYLVTVEEGCVMGGAGSACVEAMMESGAVRPVLQLGLPDRFVDHGDPAKLLSLCGLDGDGIAKSIRERFLSHAADVASPAKRVA</sequence>
<keyword id="KW-0414">Isoprene biosynthesis</keyword>
<keyword id="KW-0460">Magnesium</keyword>
<keyword id="KW-0479">Metal-binding</keyword>
<keyword id="KW-1185">Reference proteome</keyword>
<keyword id="KW-0784">Thiamine biosynthesis</keyword>
<keyword id="KW-0786">Thiamine pyrophosphate</keyword>
<keyword id="KW-0808">Transferase</keyword>
<reference key="1">
    <citation type="journal article" date="2004" name="Proc. Natl. Acad. Sci. U.S.A.">
        <title>Structural flexibility in the Burkholderia mallei genome.</title>
        <authorList>
            <person name="Nierman W.C."/>
            <person name="DeShazer D."/>
            <person name="Kim H.S."/>
            <person name="Tettelin H."/>
            <person name="Nelson K.E."/>
            <person name="Feldblyum T.V."/>
            <person name="Ulrich R.L."/>
            <person name="Ronning C.M."/>
            <person name="Brinkac L.M."/>
            <person name="Daugherty S.C."/>
            <person name="Davidsen T.D."/>
            <person name="DeBoy R.T."/>
            <person name="Dimitrov G."/>
            <person name="Dodson R.J."/>
            <person name="Durkin A.S."/>
            <person name="Gwinn M.L."/>
            <person name="Haft D.H."/>
            <person name="Khouri H.M."/>
            <person name="Kolonay J.F."/>
            <person name="Madupu R."/>
            <person name="Mohammoud Y."/>
            <person name="Nelson W.C."/>
            <person name="Radune D."/>
            <person name="Romero C.M."/>
            <person name="Sarria S."/>
            <person name="Selengut J."/>
            <person name="Shamblin C."/>
            <person name="Sullivan S.A."/>
            <person name="White O."/>
            <person name="Yu Y."/>
            <person name="Zafar N."/>
            <person name="Zhou L."/>
            <person name="Fraser C.M."/>
        </authorList>
    </citation>
    <scope>NUCLEOTIDE SEQUENCE [LARGE SCALE GENOMIC DNA]</scope>
    <source>
        <strain>ATCC 23344</strain>
    </source>
</reference>
<gene>
    <name evidence="1" type="primary">dxs</name>
    <name type="ordered locus">BMAA0330</name>
</gene>
<protein>
    <recommendedName>
        <fullName evidence="1">1-deoxy-D-xylulose-5-phosphate synthase</fullName>
        <ecNumber evidence="1">2.2.1.7</ecNumber>
    </recommendedName>
    <alternativeName>
        <fullName evidence="1">1-deoxyxylulose-5-phosphate synthase</fullName>
        <shortName evidence="1">DXP synthase</shortName>
        <shortName evidence="1">DXPS</shortName>
    </alternativeName>
</protein>
<proteinExistence type="inferred from homology"/>
<evidence type="ECO:0000255" key="1">
    <source>
        <dbReference type="HAMAP-Rule" id="MF_00315"/>
    </source>
</evidence>
<name>DXS_BURMA</name>